<evidence type="ECO:0000255" key="1">
    <source>
        <dbReference type="HAMAP-Rule" id="MF_00144"/>
    </source>
</evidence>
<name>MNMA_CHLL3</name>
<reference key="1">
    <citation type="submission" date="2005-08" db="EMBL/GenBank/DDBJ databases">
        <title>Complete sequence of Pelodictyon luteolum DSM 273.</title>
        <authorList>
            <consortium name="US DOE Joint Genome Institute"/>
            <person name="Copeland A."/>
            <person name="Lucas S."/>
            <person name="Lapidus A."/>
            <person name="Barry K."/>
            <person name="Detter J.C."/>
            <person name="Glavina T."/>
            <person name="Hammon N."/>
            <person name="Israni S."/>
            <person name="Pitluck S."/>
            <person name="Bryant D."/>
            <person name="Schmutz J."/>
            <person name="Larimer F."/>
            <person name="Land M."/>
            <person name="Kyrpides N."/>
            <person name="Ivanova N."/>
            <person name="Richardson P."/>
        </authorList>
    </citation>
    <scope>NUCLEOTIDE SEQUENCE [LARGE SCALE GENOMIC DNA]</scope>
    <source>
        <strain>DSM 273 / BCRC 81028 / 2530</strain>
    </source>
</reference>
<keyword id="KW-0067">ATP-binding</keyword>
<keyword id="KW-0963">Cytoplasm</keyword>
<keyword id="KW-1015">Disulfide bond</keyword>
<keyword id="KW-0547">Nucleotide-binding</keyword>
<keyword id="KW-1185">Reference proteome</keyword>
<keyword id="KW-0694">RNA-binding</keyword>
<keyword id="KW-0808">Transferase</keyword>
<keyword id="KW-0819">tRNA processing</keyword>
<keyword id="KW-0820">tRNA-binding</keyword>
<proteinExistence type="inferred from homology"/>
<feature type="chain" id="PRO_0000349733" description="tRNA-specific 2-thiouridylase MnmA">
    <location>
        <begin position="1"/>
        <end position="367"/>
    </location>
</feature>
<feature type="region of interest" description="Interaction with tRNA" evidence="1">
    <location>
        <begin position="145"/>
        <end position="147"/>
    </location>
</feature>
<feature type="region of interest" description="Interaction with tRNA" evidence="1">
    <location>
        <begin position="304"/>
        <end position="305"/>
    </location>
</feature>
<feature type="active site" description="Nucleophile" evidence="1">
    <location>
        <position position="99"/>
    </location>
</feature>
<feature type="active site" description="Cysteine persulfide intermediate" evidence="1">
    <location>
        <position position="195"/>
    </location>
</feature>
<feature type="binding site" evidence="1">
    <location>
        <begin position="11"/>
        <end position="18"/>
    </location>
    <ligand>
        <name>ATP</name>
        <dbReference type="ChEBI" id="CHEBI:30616"/>
    </ligand>
</feature>
<feature type="binding site" evidence="1">
    <location>
        <position position="37"/>
    </location>
    <ligand>
        <name>ATP</name>
        <dbReference type="ChEBI" id="CHEBI:30616"/>
    </ligand>
</feature>
<feature type="binding site" evidence="1">
    <location>
        <position position="123"/>
    </location>
    <ligand>
        <name>ATP</name>
        <dbReference type="ChEBI" id="CHEBI:30616"/>
    </ligand>
</feature>
<feature type="site" description="Interaction with tRNA" evidence="1">
    <location>
        <position position="124"/>
    </location>
</feature>
<feature type="site" description="Interaction with tRNA" evidence="1">
    <location>
        <position position="341"/>
    </location>
</feature>
<feature type="disulfide bond" description="Alternate" evidence="1">
    <location>
        <begin position="99"/>
        <end position="195"/>
    </location>
</feature>
<accession>Q3B625</accession>
<dbReference type="EC" id="2.8.1.13" evidence="1"/>
<dbReference type="EMBL" id="CP000096">
    <property type="protein sequence ID" value="ABB23206.1"/>
    <property type="molecule type" value="Genomic_DNA"/>
</dbReference>
<dbReference type="RefSeq" id="WP_011357081.1">
    <property type="nucleotide sequence ID" value="NC_007512.1"/>
</dbReference>
<dbReference type="SMR" id="Q3B625"/>
<dbReference type="STRING" id="319225.Plut_0318"/>
<dbReference type="KEGG" id="plt:Plut_0318"/>
<dbReference type="eggNOG" id="COG0482">
    <property type="taxonomic scope" value="Bacteria"/>
</dbReference>
<dbReference type="HOGENOM" id="CLU_035188_1_0_10"/>
<dbReference type="OrthoDB" id="9800696at2"/>
<dbReference type="Proteomes" id="UP000002709">
    <property type="component" value="Chromosome"/>
</dbReference>
<dbReference type="GO" id="GO:0005737">
    <property type="term" value="C:cytoplasm"/>
    <property type="evidence" value="ECO:0007669"/>
    <property type="project" value="UniProtKB-SubCell"/>
</dbReference>
<dbReference type="GO" id="GO:0005524">
    <property type="term" value="F:ATP binding"/>
    <property type="evidence" value="ECO:0007669"/>
    <property type="project" value="UniProtKB-KW"/>
</dbReference>
<dbReference type="GO" id="GO:0000049">
    <property type="term" value="F:tRNA binding"/>
    <property type="evidence" value="ECO:0007669"/>
    <property type="project" value="UniProtKB-KW"/>
</dbReference>
<dbReference type="GO" id="GO:0103016">
    <property type="term" value="F:tRNA-uridine 2-sulfurtransferase activity"/>
    <property type="evidence" value="ECO:0007669"/>
    <property type="project" value="UniProtKB-EC"/>
</dbReference>
<dbReference type="GO" id="GO:0002143">
    <property type="term" value="P:tRNA wobble position uridine thiolation"/>
    <property type="evidence" value="ECO:0007669"/>
    <property type="project" value="TreeGrafter"/>
</dbReference>
<dbReference type="CDD" id="cd01998">
    <property type="entry name" value="MnmA_TRMU-like"/>
    <property type="match status" value="1"/>
</dbReference>
<dbReference type="Gene3D" id="2.30.30.280">
    <property type="entry name" value="Adenine nucleotide alpha hydrolases-like domains"/>
    <property type="match status" value="1"/>
</dbReference>
<dbReference type="Gene3D" id="3.40.50.620">
    <property type="entry name" value="HUPs"/>
    <property type="match status" value="1"/>
</dbReference>
<dbReference type="Gene3D" id="2.40.30.10">
    <property type="entry name" value="Translation factors"/>
    <property type="match status" value="1"/>
</dbReference>
<dbReference type="HAMAP" id="MF_00144">
    <property type="entry name" value="tRNA_thiouridyl_MnmA"/>
    <property type="match status" value="1"/>
</dbReference>
<dbReference type="InterPro" id="IPR004506">
    <property type="entry name" value="MnmA-like"/>
</dbReference>
<dbReference type="InterPro" id="IPR046885">
    <property type="entry name" value="MnmA-like_C"/>
</dbReference>
<dbReference type="InterPro" id="IPR046884">
    <property type="entry name" value="MnmA-like_central"/>
</dbReference>
<dbReference type="InterPro" id="IPR023382">
    <property type="entry name" value="MnmA-like_central_sf"/>
</dbReference>
<dbReference type="InterPro" id="IPR014729">
    <property type="entry name" value="Rossmann-like_a/b/a_fold"/>
</dbReference>
<dbReference type="NCBIfam" id="NF001138">
    <property type="entry name" value="PRK00143.1"/>
    <property type="match status" value="1"/>
</dbReference>
<dbReference type="NCBIfam" id="TIGR00420">
    <property type="entry name" value="trmU"/>
    <property type="match status" value="1"/>
</dbReference>
<dbReference type="PANTHER" id="PTHR11933:SF5">
    <property type="entry name" value="MITOCHONDRIAL TRNA-SPECIFIC 2-THIOURIDYLASE 1"/>
    <property type="match status" value="1"/>
</dbReference>
<dbReference type="PANTHER" id="PTHR11933">
    <property type="entry name" value="TRNA 5-METHYLAMINOMETHYL-2-THIOURIDYLATE -METHYLTRANSFERASE"/>
    <property type="match status" value="1"/>
</dbReference>
<dbReference type="Pfam" id="PF03054">
    <property type="entry name" value="tRNA_Me_trans"/>
    <property type="match status" value="1"/>
</dbReference>
<dbReference type="Pfam" id="PF20258">
    <property type="entry name" value="tRNA_Me_trans_C"/>
    <property type="match status" value="1"/>
</dbReference>
<dbReference type="Pfam" id="PF20259">
    <property type="entry name" value="tRNA_Me_trans_M"/>
    <property type="match status" value="1"/>
</dbReference>
<dbReference type="SUPFAM" id="SSF52402">
    <property type="entry name" value="Adenine nucleotide alpha hydrolases-like"/>
    <property type="match status" value="1"/>
</dbReference>
<gene>
    <name evidence="1" type="primary">mnmA</name>
    <name type="ordered locus">Plut_0318</name>
</gene>
<protein>
    <recommendedName>
        <fullName evidence="1">tRNA-specific 2-thiouridylase MnmA</fullName>
        <ecNumber evidence="1">2.8.1.13</ecNumber>
    </recommendedName>
</protein>
<comment type="function">
    <text evidence="1">Catalyzes the 2-thiolation of uridine at the wobble position (U34) of tRNA, leading to the formation of s(2)U34.</text>
</comment>
<comment type="catalytic activity">
    <reaction evidence="1">
        <text>S-sulfanyl-L-cysteinyl-[protein] + uridine(34) in tRNA + AH2 + ATP = 2-thiouridine(34) in tRNA + L-cysteinyl-[protein] + A + AMP + diphosphate + H(+)</text>
        <dbReference type="Rhea" id="RHEA:47032"/>
        <dbReference type="Rhea" id="RHEA-COMP:10131"/>
        <dbReference type="Rhea" id="RHEA-COMP:11726"/>
        <dbReference type="Rhea" id="RHEA-COMP:11727"/>
        <dbReference type="Rhea" id="RHEA-COMP:11728"/>
        <dbReference type="ChEBI" id="CHEBI:13193"/>
        <dbReference type="ChEBI" id="CHEBI:15378"/>
        <dbReference type="ChEBI" id="CHEBI:17499"/>
        <dbReference type="ChEBI" id="CHEBI:29950"/>
        <dbReference type="ChEBI" id="CHEBI:30616"/>
        <dbReference type="ChEBI" id="CHEBI:33019"/>
        <dbReference type="ChEBI" id="CHEBI:61963"/>
        <dbReference type="ChEBI" id="CHEBI:65315"/>
        <dbReference type="ChEBI" id="CHEBI:87170"/>
        <dbReference type="ChEBI" id="CHEBI:456215"/>
        <dbReference type="EC" id="2.8.1.13"/>
    </reaction>
</comment>
<comment type="subcellular location">
    <subcellularLocation>
        <location evidence="1">Cytoplasm</location>
    </subcellularLocation>
</comment>
<comment type="similarity">
    <text evidence="1">Belongs to the MnmA/TRMU family.</text>
</comment>
<organism>
    <name type="scientific">Chlorobium luteolum (strain DSM 273 / BCRC 81028 / 2530)</name>
    <name type="common">Pelodictyon luteolum</name>
    <dbReference type="NCBI Taxonomy" id="319225"/>
    <lineage>
        <taxon>Bacteria</taxon>
        <taxon>Pseudomonadati</taxon>
        <taxon>Chlorobiota</taxon>
        <taxon>Chlorobiia</taxon>
        <taxon>Chlorobiales</taxon>
        <taxon>Chlorobiaceae</taxon>
        <taxon>Chlorobium/Pelodictyon group</taxon>
        <taxon>Pelodictyon</taxon>
    </lineage>
</organism>
<sequence length="367" mass="40076">MERKKKKVIVGLSGGVDSSVAACMLVREGYEVLGLHLKVLQEGDGSTVLEPSPMTISSREEFHIPVFTLNLAARFRNEVMDYFKEEYLAARTPNPCMVCNKTIKWRGLLEGAAQLGADMVATGHYARTAFIDGRHRLFAGLDRKKDQSYFLWMLAQEELSRTILPLGGLTKPEVRDLARSFGLTAAEKKESQEICFVPDDDYGSYLESAVPGLHRRVEGGEILDPSGQVIGHHKGYPFYTIGQRRGLGTATGEPLYVTAIDPIGNLVHTGPKSALFSTSVEVSHLNWIGIDPPFAPMEATAKIRYRDHASPCTIIPLGPGPTGVTARIMFKEPKSALTPGQAAVFYRGEEVLGGGIIEGALPMEPHP</sequence>